<evidence type="ECO:0000255" key="1">
    <source>
        <dbReference type="HAMAP-Rule" id="MF_00319"/>
    </source>
</evidence>
<feature type="chain" id="PRO_1000019267" description="CDP-diacylglycerol pyrophosphatase">
    <location>
        <begin position="1"/>
        <end position="251"/>
    </location>
</feature>
<feature type="transmembrane region" description="Helical" evidence="1">
    <location>
        <begin position="4"/>
        <end position="24"/>
    </location>
</feature>
<keyword id="KW-0997">Cell inner membrane</keyword>
<keyword id="KW-1003">Cell membrane</keyword>
<keyword id="KW-0378">Hydrolase</keyword>
<keyword id="KW-0444">Lipid biosynthesis</keyword>
<keyword id="KW-0443">Lipid metabolism</keyword>
<keyword id="KW-0472">Membrane</keyword>
<keyword id="KW-0594">Phospholipid biosynthesis</keyword>
<keyword id="KW-1208">Phospholipid metabolism</keyword>
<keyword id="KW-0812">Transmembrane</keyword>
<keyword id="KW-1133">Transmembrane helix</keyword>
<name>CDH_SHIBS</name>
<sequence>MKKAGLLFLVMIVIAVVAAGIGYWKLTGEESDTLRKIVLEECLPNQQQNQNPSPCAEVKPNAGYVVLKDLNGPLQYLLMPTYRINGTESPLLTDPSTPNFFWLAWQARDFMSKKYGQPVPDRAVSLAINSRTGRTQNHFHIHISCIRPDVREQLDNNLANISSRWLPLPGGLRGHEYLARRVTESELVQRSPFMMLAEEVPEAREHMGSYGLAMVRQSDNSFVLLATQRNLLTLNRASAEEIQDHQCEILR</sequence>
<proteinExistence type="inferred from homology"/>
<dbReference type="EC" id="3.6.1.26" evidence="1"/>
<dbReference type="EMBL" id="CP000036">
    <property type="protein sequence ID" value="ABB68386.1"/>
    <property type="molecule type" value="Genomic_DNA"/>
</dbReference>
<dbReference type="RefSeq" id="WP_000708998.1">
    <property type="nucleotide sequence ID" value="NC_007613.1"/>
</dbReference>
<dbReference type="SMR" id="Q31U72"/>
<dbReference type="GeneID" id="93777980"/>
<dbReference type="KEGG" id="sbo:SBO_3935"/>
<dbReference type="HOGENOM" id="CLU_077117_0_1_6"/>
<dbReference type="UniPathway" id="UPA00609">
    <property type="reaction ID" value="UER00664"/>
</dbReference>
<dbReference type="Proteomes" id="UP000007067">
    <property type="component" value="Chromosome"/>
</dbReference>
<dbReference type="GO" id="GO:0005886">
    <property type="term" value="C:plasma membrane"/>
    <property type="evidence" value="ECO:0007669"/>
    <property type="project" value="UniProtKB-SubCell"/>
</dbReference>
<dbReference type="GO" id="GO:0008715">
    <property type="term" value="F:CDP-diacylglycerol diphosphatase activity"/>
    <property type="evidence" value="ECO:0007669"/>
    <property type="project" value="UniProtKB-UniRule"/>
</dbReference>
<dbReference type="GO" id="GO:0046342">
    <property type="term" value="P:CDP-diacylglycerol catabolic process"/>
    <property type="evidence" value="ECO:0007669"/>
    <property type="project" value="UniProtKB-UniRule"/>
</dbReference>
<dbReference type="GO" id="GO:0008654">
    <property type="term" value="P:phospholipid biosynthetic process"/>
    <property type="evidence" value="ECO:0007669"/>
    <property type="project" value="UniProtKB-KW"/>
</dbReference>
<dbReference type="FunFam" id="3.30.428.30:FF:000001">
    <property type="entry name" value="CDP-diacylglycerol pyrophosphatase"/>
    <property type="match status" value="1"/>
</dbReference>
<dbReference type="Gene3D" id="3.30.428.30">
    <property type="entry name" value="HIT family - CDH-like"/>
    <property type="match status" value="1"/>
</dbReference>
<dbReference type="HAMAP" id="MF_00319">
    <property type="entry name" value="Cdh"/>
    <property type="match status" value="1"/>
</dbReference>
<dbReference type="InterPro" id="IPR003763">
    <property type="entry name" value="CDP-diacylglyc_Pase"/>
</dbReference>
<dbReference type="InterPro" id="IPR015993">
    <property type="entry name" value="CDP-diacylglyc_Pase_proteobac"/>
</dbReference>
<dbReference type="InterPro" id="IPR036265">
    <property type="entry name" value="HIT-like_sf"/>
</dbReference>
<dbReference type="NCBIfam" id="TIGR00672">
    <property type="entry name" value="cdh"/>
    <property type="match status" value="1"/>
</dbReference>
<dbReference type="NCBIfam" id="NF003986">
    <property type="entry name" value="PRK05471.1-5"/>
    <property type="match status" value="1"/>
</dbReference>
<dbReference type="NCBIfam" id="NF003987">
    <property type="entry name" value="PRK05471.1-6"/>
    <property type="match status" value="1"/>
</dbReference>
<dbReference type="Pfam" id="PF02611">
    <property type="entry name" value="CDH"/>
    <property type="match status" value="1"/>
</dbReference>
<dbReference type="PIRSF" id="PIRSF001273">
    <property type="entry name" value="CDH"/>
    <property type="match status" value="1"/>
</dbReference>
<dbReference type="SUPFAM" id="SSF54197">
    <property type="entry name" value="HIT-like"/>
    <property type="match status" value="1"/>
</dbReference>
<comment type="catalytic activity">
    <reaction evidence="1">
        <text>a CDP-1,2-diacyl-sn-glycerol + H2O = a 1,2-diacyl-sn-glycero-3-phosphate + CMP + 2 H(+)</text>
        <dbReference type="Rhea" id="RHEA:15221"/>
        <dbReference type="ChEBI" id="CHEBI:15377"/>
        <dbReference type="ChEBI" id="CHEBI:15378"/>
        <dbReference type="ChEBI" id="CHEBI:58332"/>
        <dbReference type="ChEBI" id="CHEBI:58608"/>
        <dbReference type="ChEBI" id="CHEBI:60377"/>
        <dbReference type="EC" id="3.6.1.26"/>
    </reaction>
</comment>
<comment type="pathway">
    <text evidence="1">Phospholipid metabolism; CDP-diacylglycerol degradation; phosphatidate from CDP-diacylglycerol: step 1/1.</text>
</comment>
<comment type="subcellular location">
    <subcellularLocation>
        <location evidence="1">Cell inner membrane</location>
        <topology evidence="1">Single-pass membrane protein</topology>
    </subcellularLocation>
</comment>
<comment type="similarity">
    <text evidence="1">Belongs to the Cdh family.</text>
</comment>
<gene>
    <name evidence="1" type="primary">cdh</name>
    <name type="ordered locus">SBO_3935</name>
</gene>
<protein>
    <recommendedName>
        <fullName evidence="1">CDP-diacylglycerol pyrophosphatase</fullName>
        <ecNumber evidence="1">3.6.1.26</ecNumber>
    </recommendedName>
    <alternativeName>
        <fullName evidence="1">CDP-diacylglycerol phosphatidylhydrolase</fullName>
    </alternativeName>
    <alternativeName>
        <fullName evidence="1">CDP-diglyceride hydrolase</fullName>
    </alternativeName>
</protein>
<reference key="1">
    <citation type="journal article" date="2005" name="Nucleic Acids Res.">
        <title>Genome dynamics and diversity of Shigella species, the etiologic agents of bacillary dysentery.</title>
        <authorList>
            <person name="Yang F."/>
            <person name="Yang J."/>
            <person name="Zhang X."/>
            <person name="Chen L."/>
            <person name="Jiang Y."/>
            <person name="Yan Y."/>
            <person name="Tang X."/>
            <person name="Wang J."/>
            <person name="Xiong Z."/>
            <person name="Dong J."/>
            <person name="Xue Y."/>
            <person name="Zhu Y."/>
            <person name="Xu X."/>
            <person name="Sun L."/>
            <person name="Chen S."/>
            <person name="Nie H."/>
            <person name="Peng J."/>
            <person name="Xu J."/>
            <person name="Wang Y."/>
            <person name="Yuan Z."/>
            <person name="Wen Y."/>
            <person name="Yao Z."/>
            <person name="Shen Y."/>
            <person name="Qiang B."/>
            <person name="Hou Y."/>
            <person name="Yu J."/>
            <person name="Jin Q."/>
        </authorList>
    </citation>
    <scope>NUCLEOTIDE SEQUENCE [LARGE SCALE GENOMIC DNA]</scope>
    <source>
        <strain>Sb227</strain>
    </source>
</reference>
<accession>Q31U72</accession>
<organism>
    <name type="scientific">Shigella boydii serotype 4 (strain Sb227)</name>
    <dbReference type="NCBI Taxonomy" id="300268"/>
    <lineage>
        <taxon>Bacteria</taxon>
        <taxon>Pseudomonadati</taxon>
        <taxon>Pseudomonadota</taxon>
        <taxon>Gammaproteobacteria</taxon>
        <taxon>Enterobacterales</taxon>
        <taxon>Enterobacteriaceae</taxon>
        <taxon>Shigella</taxon>
    </lineage>
</organism>